<keyword id="KW-0143">Chaperone</keyword>
<keyword id="KW-0963">Cytoplasm</keyword>
<keyword id="KW-0342">GTP-binding</keyword>
<keyword id="KW-0996">Nickel insertion</keyword>
<keyword id="KW-0547">Nucleotide-binding</keyword>
<gene>
    <name evidence="1" type="primary">ureG</name>
    <name type="ordered locus">Rpic_2181</name>
</gene>
<proteinExistence type="inferred from homology"/>
<evidence type="ECO:0000255" key="1">
    <source>
        <dbReference type="HAMAP-Rule" id="MF_01389"/>
    </source>
</evidence>
<dbReference type="EMBL" id="CP001068">
    <property type="protein sequence ID" value="ACD27315.1"/>
    <property type="molecule type" value="Genomic_DNA"/>
</dbReference>
<dbReference type="SMR" id="B2U7M8"/>
<dbReference type="STRING" id="402626.Rpic_2181"/>
<dbReference type="KEGG" id="rpi:Rpic_2181"/>
<dbReference type="eggNOG" id="COG0378">
    <property type="taxonomic scope" value="Bacteria"/>
</dbReference>
<dbReference type="HOGENOM" id="CLU_072144_1_0_4"/>
<dbReference type="GO" id="GO:0005737">
    <property type="term" value="C:cytoplasm"/>
    <property type="evidence" value="ECO:0007669"/>
    <property type="project" value="UniProtKB-SubCell"/>
</dbReference>
<dbReference type="GO" id="GO:0005525">
    <property type="term" value="F:GTP binding"/>
    <property type="evidence" value="ECO:0007669"/>
    <property type="project" value="UniProtKB-KW"/>
</dbReference>
<dbReference type="GO" id="GO:0003924">
    <property type="term" value="F:GTPase activity"/>
    <property type="evidence" value="ECO:0007669"/>
    <property type="project" value="InterPro"/>
</dbReference>
<dbReference type="GO" id="GO:0016151">
    <property type="term" value="F:nickel cation binding"/>
    <property type="evidence" value="ECO:0007669"/>
    <property type="project" value="UniProtKB-UniRule"/>
</dbReference>
<dbReference type="GO" id="GO:0043419">
    <property type="term" value="P:urea catabolic process"/>
    <property type="evidence" value="ECO:0007669"/>
    <property type="project" value="InterPro"/>
</dbReference>
<dbReference type="CDD" id="cd05540">
    <property type="entry name" value="UreG"/>
    <property type="match status" value="1"/>
</dbReference>
<dbReference type="FunFam" id="3.40.50.300:FF:000208">
    <property type="entry name" value="Urease accessory protein UreG"/>
    <property type="match status" value="1"/>
</dbReference>
<dbReference type="Gene3D" id="3.40.50.300">
    <property type="entry name" value="P-loop containing nucleotide triphosphate hydrolases"/>
    <property type="match status" value="1"/>
</dbReference>
<dbReference type="HAMAP" id="MF_01389">
    <property type="entry name" value="UreG"/>
    <property type="match status" value="1"/>
</dbReference>
<dbReference type="InterPro" id="IPR003495">
    <property type="entry name" value="CobW/HypB/UreG_nucleotide-bd"/>
</dbReference>
<dbReference type="InterPro" id="IPR027417">
    <property type="entry name" value="P-loop_NTPase"/>
</dbReference>
<dbReference type="InterPro" id="IPR004400">
    <property type="entry name" value="UreG"/>
</dbReference>
<dbReference type="NCBIfam" id="TIGR00101">
    <property type="entry name" value="ureG"/>
    <property type="match status" value="1"/>
</dbReference>
<dbReference type="PANTHER" id="PTHR31715">
    <property type="entry name" value="UREASE ACCESSORY PROTEIN G"/>
    <property type="match status" value="1"/>
</dbReference>
<dbReference type="PANTHER" id="PTHR31715:SF0">
    <property type="entry name" value="UREASE ACCESSORY PROTEIN G"/>
    <property type="match status" value="1"/>
</dbReference>
<dbReference type="Pfam" id="PF02492">
    <property type="entry name" value="cobW"/>
    <property type="match status" value="1"/>
</dbReference>
<dbReference type="PIRSF" id="PIRSF005624">
    <property type="entry name" value="Ni-bind_GTPase"/>
    <property type="match status" value="1"/>
</dbReference>
<dbReference type="SUPFAM" id="SSF52540">
    <property type="entry name" value="P-loop containing nucleoside triphosphate hydrolases"/>
    <property type="match status" value="1"/>
</dbReference>
<comment type="function">
    <text evidence="1">Facilitates the functional incorporation of the urease nickel metallocenter. This process requires GTP hydrolysis, probably effectuated by UreG.</text>
</comment>
<comment type="subunit">
    <text evidence="1">Homodimer. UreD, UreF and UreG form a complex that acts as a GTP-hydrolysis-dependent molecular chaperone, activating the urease apoprotein by helping to assemble the nickel containing metallocenter of UreC. The UreE protein probably delivers the nickel.</text>
</comment>
<comment type="subcellular location">
    <subcellularLocation>
        <location evidence="1">Cytoplasm</location>
    </subcellularLocation>
</comment>
<comment type="similarity">
    <text evidence="1">Belongs to the SIMIBI class G3E GTPase family. UreG subfamily.</text>
</comment>
<organism>
    <name type="scientific">Ralstonia pickettii (strain 12J)</name>
    <dbReference type="NCBI Taxonomy" id="402626"/>
    <lineage>
        <taxon>Bacteria</taxon>
        <taxon>Pseudomonadati</taxon>
        <taxon>Pseudomonadota</taxon>
        <taxon>Betaproteobacteria</taxon>
        <taxon>Burkholderiales</taxon>
        <taxon>Burkholderiaceae</taxon>
        <taxon>Ralstonia</taxon>
    </lineage>
</organism>
<protein>
    <recommendedName>
        <fullName evidence="1">Urease accessory protein UreG</fullName>
    </recommendedName>
</protein>
<feature type="chain" id="PRO_1000145208" description="Urease accessory protein UreG">
    <location>
        <begin position="1"/>
        <end position="206"/>
    </location>
</feature>
<feature type="binding site" evidence="1">
    <location>
        <begin position="15"/>
        <end position="22"/>
    </location>
    <ligand>
        <name>GTP</name>
        <dbReference type="ChEBI" id="CHEBI:37565"/>
    </ligand>
</feature>
<accession>B2U7M8</accession>
<name>UREG_RALPJ</name>
<reference key="1">
    <citation type="submission" date="2008-05" db="EMBL/GenBank/DDBJ databases">
        <title>Complete sequence of chromosome 1 of Ralstonia pickettii 12J.</title>
        <authorList>
            <person name="Lucas S."/>
            <person name="Copeland A."/>
            <person name="Lapidus A."/>
            <person name="Glavina del Rio T."/>
            <person name="Dalin E."/>
            <person name="Tice H."/>
            <person name="Bruce D."/>
            <person name="Goodwin L."/>
            <person name="Pitluck S."/>
            <person name="Meincke L."/>
            <person name="Brettin T."/>
            <person name="Detter J.C."/>
            <person name="Han C."/>
            <person name="Kuske C.R."/>
            <person name="Schmutz J."/>
            <person name="Larimer F."/>
            <person name="Land M."/>
            <person name="Hauser L."/>
            <person name="Kyrpides N."/>
            <person name="Mikhailova N."/>
            <person name="Marsh T."/>
            <person name="Richardson P."/>
        </authorList>
    </citation>
    <scope>NUCLEOTIDE SEQUENCE [LARGE SCALE GENOMIC DNA]</scope>
    <source>
        <strain>12J</strain>
    </source>
</reference>
<sequence>MRTKKLPALRVGVGGPVGSGKTTLLEMLCKAMRERYDLVAITNDIYTKEDQRLLTISGALPAERIMGVETGGCPHTAIREDASINLEAVDRMLAKFPDADVVFIESGGDNLAATFSPELSDLTIYVIDVAGGEKIPRKGGPGITKSDLLIINKTDLAPYVGASLEVMESDTRKMRGDRPFVMCNLRAQGGLDEVIRFIERQGMLAA</sequence>